<dbReference type="EMBL" id="AC005965">
    <property type="status" value="NOT_ANNOTATED_CDS"/>
    <property type="molecule type" value="Genomic_DNA"/>
</dbReference>
<dbReference type="EMBL" id="AF077407">
    <property type="status" value="NOT_ANNOTATED_CDS"/>
    <property type="molecule type" value="Genomic_DNA"/>
</dbReference>
<dbReference type="EMBL" id="CP002688">
    <property type="protein sequence ID" value="AED93539.1"/>
    <property type="molecule type" value="Genomic_DNA"/>
</dbReference>
<dbReference type="RefSeq" id="NP_197995.1">
    <property type="nucleotide sequence ID" value="NM_122524.3"/>
</dbReference>
<dbReference type="FunCoup" id="Q3E936">
    <property type="interactions" value="161"/>
</dbReference>
<dbReference type="STRING" id="3702.Q3E936"/>
<dbReference type="PaxDb" id="3702-AT5G26230.1"/>
<dbReference type="EnsemblPlants" id="AT5G26230.1">
    <property type="protein sequence ID" value="AT5G26230.1"/>
    <property type="gene ID" value="AT5G26230"/>
</dbReference>
<dbReference type="GeneID" id="832692"/>
<dbReference type="Gramene" id="AT5G26230.1">
    <property type="protein sequence ID" value="AT5G26230.1"/>
    <property type="gene ID" value="AT5G26230"/>
</dbReference>
<dbReference type="KEGG" id="ath:AT5G26230"/>
<dbReference type="Araport" id="AT5G26230"/>
<dbReference type="TAIR" id="AT5G26230">
    <property type="gene designation" value="MAKR1"/>
</dbReference>
<dbReference type="eggNOG" id="ENOG502QVKJ">
    <property type="taxonomic scope" value="Eukaryota"/>
</dbReference>
<dbReference type="HOGENOM" id="CLU_765951_0_0_1"/>
<dbReference type="InParanoid" id="Q3E936"/>
<dbReference type="OMA" id="MYCGDTS"/>
<dbReference type="PhylomeDB" id="Q3E936"/>
<dbReference type="PRO" id="PR:Q3E936"/>
<dbReference type="Proteomes" id="UP000006548">
    <property type="component" value="Chromosome 5"/>
</dbReference>
<dbReference type="ExpressionAtlas" id="Q3E936">
    <property type="expression patterns" value="baseline and differential"/>
</dbReference>
<dbReference type="GO" id="GO:0005829">
    <property type="term" value="C:cytosol"/>
    <property type="evidence" value="ECO:0000314"/>
    <property type="project" value="TAIR"/>
</dbReference>
<dbReference type="GO" id="GO:0005886">
    <property type="term" value="C:plasma membrane"/>
    <property type="evidence" value="ECO:0000314"/>
    <property type="project" value="TAIR"/>
</dbReference>
<dbReference type="GO" id="GO:0009536">
    <property type="term" value="C:plastid"/>
    <property type="evidence" value="ECO:0000314"/>
    <property type="project" value="TAIR"/>
</dbReference>
<dbReference type="GO" id="GO:0019210">
    <property type="term" value="F:kinase inhibitor activity"/>
    <property type="evidence" value="ECO:0000315"/>
    <property type="project" value="TAIR"/>
</dbReference>
<dbReference type="GO" id="GO:0009742">
    <property type="term" value="P:brassinosteroid mediated signaling pathway"/>
    <property type="evidence" value="ECO:0007669"/>
    <property type="project" value="UniProtKB-KW"/>
</dbReference>
<dbReference type="GO" id="GO:0006629">
    <property type="term" value="P:lipid metabolic process"/>
    <property type="evidence" value="ECO:0007669"/>
    <property type="project" value="UniProtKB-KW"/>
</dbReference>
<dbReference type="GO" id="GO:0009741">
    <property type="term" value="P:response to brassinosteroid"/>
    <property type="evidence" value="ECO:0000315"/>
    <property type="project" value="TAIR"/>
</dbReference>
<dbReference type="InterPro" id="IPR039620">
    <property type="entry name" value="BKI1/MAKR1/3/4"/>
</dbReference>
<dbReference type="PANTHER" id="PTHR33312:SF8">
    <property type="entry name" value="MEMBRANE-ASSOCIATED KINASE REGULATOR 1-RELATED"/>
    <property type="match status" value="1"/>
</dbReference>
<dbReference type="PANTHER" id="PTHR33312">
    <property type="entry name" value="MEMBRANE-ASSOCIATED KINASE REGULATOR 4-RELATED"/>
    <property type="match status" value="1"/>
</dbReference>
<reference key="1">
    <citation type="journal article" date="2000" name="Nature">
        <title>Sequence and analysis of chromosome 5 of the plant Arabidopsis thaliana.</title>
        <authorList>
            <person name="Tabata S."/>
            <person name="Kaneko T."/>
            <person name="Nakamura Y."/>
            <person name="Kotani H."/>
            <person name="Kato T."/>
            <person name="Asamizu E."/>
            <person name="Miyajima N."/>
            <person name="Sasamoto S."/>
            <person name="Kimura T."/>
            <person name="Hosouchi T."/>
            <person name="Kawashima K."/>
            <person name="Kohara M."/>
            <person name="Matsumoto M."/>
            <person name="Matsuno A."/>
            <person name="Muraki A."/>
            <person name="Nakayama S."/>
            <person name="Nakazaki N."/>
            <person name="Naruo K."/>
            <person name="Okumura S."/>
            <person name="Shinpo S."/>
            <person name="Takeuchi C."/>
            <person name="Wada T."/>
            <person name="Watanabe A."/>
            <person name="Yamada M."/>
            <person name="Yasuda M."/>
            <person name="Sato S."/>
            <person name="de la Bastide M."/>
            <person name="Huang E."/>
            <person name="Spiegel L."/>
            <person name="Gnoj L."/>
            <person name="O'Shaughnessy A."/>
            <person name="Preston R."/>
            <person name="Habermann K."/>
            <person name="Murray J."/>
            <person name="Johnson D."/>
            <person name="Rohlfing T."/>
            <person name="Nelson J."/>
            <person name="Stoneking T."/>
            <person name="Pepin K."/>
            <person name="Spieth J."/>
            <person name="Sekhon M."/>
            <person name="Armstrong J."/>
            <person name="Becker M."/>
            <person name="Belter E."/>
            <person name="Cordum H."/>
            <person name="Cordes M."/>
            <person name="Courtney L."/>
            <person name="Courtney W."/>
            <person name="Dante M."/>
            <person name="Du H."/>
            <person name="Edwards J."/>
            <person name="Fryman J."/>
            <person name="Haakensen B."/>
            <person name="Lamar E."/>
            <person name="Latreille P."/>
            <person name="Leonard S."/>
            <person name="Meyer R."/>
            <person name="Mulvaney E."/>
            <person name="Ozersky P."/>
            <person name="Riley A."/>
            <person name="Strowmatt C."/>
            <person name="Wagner-McPherson C."/>
            <person name="Wollam A."/>
            <person name="Yoakum M."/>
            <person name="Bell M."/>
            <person name="Dedhia N."/>
            <person name="Parnell L."/>
            <person name="Shah R."/>
            <person name="Rodriguez M."/>
            <person name="Hoon See L."/>
            <person name="Vil D."/>
            <person name="Baker J."/>
            <person name="Kirchoff K."/>
            <person name="Toth K."/>
            <person name="King L."/>
            <person name="Bahret A."/>
            <person name="Miller B."/>
            <person name="Marra M.A."/>
            <person name="Martienssen R."/>
            <person name="McCombie W.R."/>
            <person name="Wilson R.K."/>
            <person name="Murphy G."/>
            <person name="Bancroft I."/>
            <person name="Volckaert G."/>
            <person name="Wambutt R."/>
            <person name="Duesterhoeft A."/>
            <person name="Stiekema W."/>
            <person name="Pohl T."/>
            <person name="Entian K.-D."/>
            <person name="Terryn N."/>
            <person name="Hartley N."/>
            <person name="Bent E."/>
            <person name="Johnson S."/>
            <person name="Langham S.-A."/>
            <person name="McCullagh B."/>
            <person name="Robben J."/>
            <person name="Grymonprez B."/>
            <person name="Zimmermann W."/>
            <person name="Ramsperger U."/>
            <person name="Wedler H."/>
            <person name="Balke K."/>
            <person name="Wedler E."/>
            <person name="Peters S."/>
            <person name="van Staveren M."/>
            <person name="Dirkse W."/>
            <person name="Mooijman P."/>
            <person name="Klein Lankhorst R."/>
            <person name="Weitzenegger T."/>
            <person name="Bothe G."/>
            <person name="Rose M."/>
            <person name="Hauf J."/>
            <person name="Berneiser S."/>
            <person name="Hempel S."/>
            <person name="Feldpausch M."/>
            <person name="Lamberth S."/>
            <person name="Villarroel R."/>
            <person name="Gielen J."/>
            <person name="Ardiles W."/>
            <person name="Bents O."/>
            <person name="Lemcke K."/>
            <person name="Kolesov G."/>
            <person name="Mayer K.F.X."/>
            <person name="Rudd S."/>
            <person name="Schoof H."/>
            <person name="Schueller C."/>
            <person name="Zaccaria P."/>
            <person name="Mewes H.-W."/>
            <person name="Bevan M."/>
            <person name="Fransz P.F."/>
        </authorList>
    </citation>
    <scope>NUCLEOTIDE SEQUENCE [LARGE SCALE GENOMIC DNA]</scope>
    <source>
        <strain>cv. Columbia</strain>
    </source>
</reference>
<reference key="2">
    <citation type="journal article" date="2017" name="Plant J.">
        <title>Araport11: a complete reannotation of the Arabidopsis thaliana reference genome.</title>
        <authorList>
            <person name="Cheng C.Y."/>
            <person name="Krishnakumar V."/>
            <person name="Chan A.P."/>
            <person name="Thibaud-Nissen F."/>
            <person name="Schobel S."/>
            <person name="Town C.D."/>
        </authorList>
    </citation>
    <scope>GENOME REANNOTATION</scope>
    <source>
        <strain>cv. Columbia</strain>
    </source>
</reference>
<reference key="3">
    <citation type="journal article" date="2011" name="Genes Dev.">
        <title>Tyrosine phosphorylation controls brassinosteroid receptor activation by triggering membrane release of its kinase inhibitor.</title>
        <authorList>
            <person name="Jaillais Y."/>
            <person name="Hothorn M."/>
            <person name="Belkhadir Y."/>
            <person name="Dabi T."/>
            <person name="Nimchuk Z.L."/>
            <person name="Meyerowitz E.M."/>
            <person name="Chory J."/>
        </authorList>
    </citation>
    <scope>GENE FAMILY</scope>
    <scope>NOMENCLATURE</scope>
    <scope>INTERACTION WITH BRI1</scope>
</reference>
<evidence type="ECO:0000250" key="1"/>
<evidence type="ECO:0000256" key="2">
    <source>
        <dbReference type="SAM" id="MobiDB-lite"/>
    </source>
</evidence>
<sequence>MRRQPPRPRNSPPQSHSSPSSSSSEFEFNISISPRKASSSLCPADELFYKGQLLPLQLSPRLSLVRTLGSSTSSSDYTSSSSSSVATSAARDSTESNSSTDSTASFPLLHPPPLDCCDSSRPSSVTDDEDFFFKPPKNKSSSGGFSLSRFSSVFKKDPKTNLHHHSSSSSTATTAAAPSSVKRMSSTAKEVIRKYMKKVKPLYEKLSPKQSSNIKTESSSSLKDSGNNIRGTTTVTTVTAAPTVVSSGGGLSISFSGNLMKYTKRGRCAASCPSSMRSSPNHSGVLTRGGFPVHQGSCSSSSSNNNSVSSSMEELQSAIQGAIAHCKNSMLQKNLVSSLEI</sequence>
<accession>Q3E936</accession>
<feature type="chain" id="PRO_0000410476" description="Probable membrane-associated kinase regulator 1">
    <location>
        <begin position="1"/>
        <end position="341"/>
    </location>
</feature>
<feature type="region of interest" description="Disordered" evidence="2">
    <location>
        <begin position="1"/>
        <end position="29"/>
    </location>
</feature>
<feature type="region of interest" description="Disordered" evidence="2">
    <location>
        <begin position="67"/>
        <end position="122"/>
    </location>
</feature>
<feature type="region of interest" description="Disordered" evidence="2">
    <location>
        <begin position="158"/>
        <end position="185"/>
    </location>
</feature>
<feature type="region of interest" description="Disordered" evidence="2">
    <location>
        <begin position="206"/>
        <end position="230"/>
    </location>
</feature>
<feature type="region of interest" description="Disordered" evidence="2">
    <location>
        <begin position="288"/>
        <end position="310"/>
    </location>
</feature>
<feature type="compositionally biased region" description="Low complexity" evidence="2">
    <location>
        <begin position="12"/>
        <end position="29"/>
    </location>
</feature>
<feature type="compositionally biased region" description="Low complexity" evidence="2">
    <location>
        <begin position="67"/>
        <end position="108"/>
    </location>
</feature>
<feature type="compositionally biased region" description="Low complexity" evidence="2">
    <location>
        <begin position="167"/>
        <end position="180"/>
    </location>
</feature>
<feature type="compositionally biased region" description="Polar residues" evidence="2">
    <location>
        <begin position="208"/>
        <end position="230"/>
    </location>
</feature>
<feature type="compositionally biased region" description="Low complexity" evidence="2">
    <location>
        <begin position="297"/>
        <end position="310"/>
    </location>
</feature>
<proteinExistence type="evidence at protein level"/>
<protein>
    <recommendedName>
        <fullName>Probable membrane-associated kinase regulator 1</fullName>
    </recommendedName>
</protein>
<name>MAKR1_ARATH</name>
<keyword id="KW-1070">Brassinosteroid signaling pathway</keyword>
<keyword id="KW-1003">Cell membrane</keyword>
<keyword id="KW-0443">Lipid metabolism</keyword>
<keyword id="KW-0472">Membrane</keyword>
<keyword id="KW-1185">Reference proteome</keyword>
<organism>
    <name type="scientific">Arabidopsis thaliana</name>
    <name type="common">Mouse-ear cress</name>
    <dbReference type="NCBI Taxonomy" id="3702"/>
    <lineage>
        <taxon>Eukaryota</taxon>
        <taxon>Viridiplantae</taxon>
        <taxon>Streptophyta</taxon>
        <taxon>Embryophyta</taxon>
        <taxon>Tracheophyta</taxon>
        <taxon>Spermatophyta</taxon>
        <taxon>Magnoliopsida</taxon>
        <taxon>eudicotyledons</taxon>
        <taxon>Gunneridae</taxon>
        <taxon>Pentapetalae</taxon>
        <taxon>rosids</taxon>
        <taxon>malvids</taxon>
        <taxon>Brassicales</taxon>
        <taxon>Brassicaceae</taxon>
        <taxon>Camelineae</taxon>
        <taxon>Arabidopsis</taxon>
    </lineage>
</organism>
<gene>
    <name type="primary">MAKR1</name>
    <name type="ordered locus">At5g26230</name>
    <name type="ORF">F9D12.20</name>
</gene>
<comment type="function">
    <text>May negatively regulate brassinosteroid signaling.</text>
</comment>
<comment type="subunit">
    <text>A C-terminus-derived peptide binds BRI1 in vitro.</text>
</comment>
<comment type="subcellular location">
    <subcellularLocation>
        <location evidence="1">Cell membrane</location>
    </subcellularLocation>
</comment>